<name>PYRR_DEHMB</name>
<organism>
    <name type="scientific">Dehalococcoides mccartyi (strain ATCC BAA-2100 / JCM 16839 / KCTC 5957 / BAV1)</name>
    <dbReference type="NCBI Taxonomy" id="216389"/>
    <lineage>
        <taxon>Bacteria</taxon>
        <taxon>Bacillati</taxon>
        <taxon>Chloroflexota</taxon>
        <taxon>Dehalococcoidia</taxon>
        <taxon>Dehalococcoidales</taxon>
        <taxon>Dehalococcoidaceae</taxon>
        <taxon>Dehalococcoides</taxon>
    </lineage>
</organism>
<sequence length="182" mass="20490">MAQKVILGAEDIRRTLARIAHEILERNQSSRDLVIIGMYTRGVPLANRLAENILRFEGLEIPVGTLDFSLYRDDLDSQRFHPTIKNTDIPFSINNKIVVLVDDVLFTGRSTRAAMDALIDYGRPKAIQLAVLVDRGHRELPVRADYIGKNIPSARDEKIKVRLTETDGQDEVLILDDEAGEV</sequence>
<feature type="chain" id="PRO_1000139193" description="Bifunctional protein PyrR">
    <location>
        <begin position="1"/>
        <end position="182"/>
    </location>
</feature>
<feature type="short sequence motif" description="PRPP-binding" evidence="1">
    <location>
        <begin position="98"/>
        <end position="110"/>
    </location>
</feature>
<accession>A5FQE0</accession>
<protein>
    <recommendedName>
        <fullName evidence="1">Bifunctional protein PyrR</fullName>
    </recommendedName>
    <domain>
        <recommendedName>
            <fullName evidence="1">Pyrimidine operon regulatory protein</fullName>
        </recommendedName>
    </domain>
    <domain>
        <recommendedName>
            <fullName evidence="1">Uracil phosphoribosyltransferase</fullName>
            <shortName evidence="1">UPRTase</shortName>
            <ecNumber evidence="1">2.4.2.9</ecNumber>
        </recommendedName>
    </domain>
</protein>
<proteinExistence type="inferred from homology"/>
<dbReference type="EC" id="2.4.2.9" evidence="1"/>
<dbReference type="EMBL" id="CP000688">
    <property type="protein sequence ID" value="ABQ17588.1"/>
    <property type="molecule type" value="Genomic_DNA"/>
</dbReference>
<dbReference type="SMR" id="A5FQE0"/>
<dbReference type="KEGG" id="deb:DehaBAV1_1008"/>
<dbReference type="PATRIC" id="fig|216389.18.peg.1063"/>
<dbReference type="HOGENOM" id="CLU_094234_2_1_0"/>
<dbReference type="GO" id="GO:0004845">
    <property type="term" value="F:uracil phosphoribosyltransferase activity"/>
    <property type="evidence" value="ECO:0007669"/>
    <property type="project" value="UniProtKB-UniRule"/>
</dbReference>
<dbReference type="GO" id="GO:0006355">
    <property type="term" value="P:regulation of DNA-templated transcription"/>
    <property type="evidence" value="ECO:0007669"/>
    <property type="project" value="UniProtKB-UniRule"/>
</dbReference>
<dbReference type="CDD" id="cd06223">
    <property type="entry name" value="PRTases_typeI"/>
    <property type="match status" value="1"/>
</dbReference>
<dbReference type="FunFam" id="3.40.50.2020:FF:000020">
    <property type="entry name" value="Bifunctional protein PyrR"/>
    <property type="match status" value="1"/>
</dbReference>
<dbReference type="Gene3D" id="3.40.50.2020">
    <property type="match status" value="1"/>
</dbReference>
<dbReference type="HAMAP" id="MF_01219">
    <property type="entry name" value="PyrR"/>
    <property type="match status" value="1"/>
</dbReference>
<dbReference type="InterPro" id="IPR000836">
    <property type="entry name" value="PRibTrfase_dom"/>
</dbReference>
<dbReference type="InterPro" id="IPR029057">
    <property type="entry name" value="PRTase-like"/>
</dbReference>
<dbReference type="InterPro" id="IPR023050">
    <property type="entry name" value="PyrR"/>
</dbReference>
<dbReference type="InterPro" id="IPR050137">
    <property type="entry name" value="PyrR_bifunctional"/>
</dbReference>
<dbReference type="NCBIfam" id="NF003545">
    <property type="entry name" value="PRK05205.1-1"/>
    <property type="match status" value="1"/>
</dbReference>
<dbReference type="NCBIfam" id="NF003547">
    <property type="entry name" value="PRK05205.1-3"/>
    <property type="match status" value="1"/>
</dbReference>
<dbReference type="NCBIfam" id="NF003549">
    <property type="entry name" value="PRK05205.1-5"/>
    <property type="match status" value="1"/>
</dbReference>
<dbReference type="PANTHER" id="PTHR11608">
    <property type="entry name" value="BIFUNCTIONAL PROTEIN PYRR"/>
    <property type="match status" value="1"/>
</dbReference>
<dbReference type="PANTHER" id="PTHR11608:SF0">
    <property type="entry name" value="BIFUNCTIONAL PROTEIN PYRR"/>
    <property type="match status" value="1"/>
</dbReference>
<dbReference type="Pfam" id="PF00156">
    <property type="entry name" value="Pribosyltran"/>
    <property type="match status" value="1"/>
</dbReference>
<dbReference type="SUPFAM" id="SSF53271">
    <property type="entry name" value="PRTase-like"/>
    <property type="match status" value="1"/>
</dbReference>
<evidence type="ECO:0000255" key="1">
    <source>
        <dbReference type="HAMAP-Rule" id="MF_01219"/>
    </source>
</evidence>
<gene>
    <name evidence="1" type="primary">pyrR</name>
    <name type="ordered locus">DehaBAV1_1008</name>
</gene>
<comment type="function">
    <text evidence="1">Regulates the transcription of the pyrimidine nucleotide (pyr) operon in response to exogenous pyrimidines.</text>
</comment>
<comment type="function">
    <text evidence="1">Also displays a weak uracil phosphoribosyltransferase activity which is not physiologically significant.</text>
</comment>
<comment type="catalytic activity">
    <reaction evidence="1">
        <text>UMP + diphosphate = 5-phospho-alpha-D-ribose 1-diphosphate + uracil</text>
        <dbReference type="Rhea" id="RHEA:13017"/>
        <dbReference type="ChEBI" id="CHEBI:17568"/>
        <dbReference type="ChEBI" id="CHEBI:33019"/>
        <dbReference type="ChEBI" id="CHEBI:57865"/>
        <dbReference type="ChEBI" id="CHEBI:58017"/>
        <dbReference type="EC" id="2.4.2.9"/>
    </reaction>
</comment>
<comment type="similarity">
    <text evidence="1">Belongs to the purine/pyrimidine phosphoribosyltransferase family. PyrR subfamily.</text>
</comment>
<reference key="1">
    <citation type="submission" date="2007-05" db="EMBL/GenBank/DDBJ databases">
        <title>Complete sequence of Dehalococcoides sp. BAV1.</title>
        <authorList>
            <consortium name="US DOE Joint Genome Institute"/>
            <person name="Copeland A."/>
            <person name="Lucas S."/>
            <person name="Lapidus A."/>
            <person name="Barry K."/>
            <person name="Detter J.C."/>
            <person name="Glavina del Rio T."/>
            <person name="Hammon N."/>
            <person name="Israni S."/>
            <person name="Pitluck S."/>
            <person name="Lowry S."/>
            <person name="Clum A."/>
            <person name="Schmutz J."/>
            <person name="Larimer F."/>
            <person name="Land M."/>
            <person name="Hauser L."/>
            <person name="Kyrpides N."/>
            <person name="Kim E."/>
            <person name="Ritalahti K.M."/>
            <person name="Loeffler F."/>
            <person name="Richardson P."/>
        </authorList>
    </citation>
    <scope>NUCLEOTIDE SEQUENCE [LARGE SCALE GENOMIC DNA]</scope>
    <source>
        <strain>ATCC BAA-2100 / JCM 16839 / KCTC 5957 / BAV1</strain>
    </source>
</reference>
<keyword id="KW-0328">Glycosyltransferase</keyword>
<keyword id="KW-0804">Transcription</keyword>
<keyword id="KW-0805">Transcription regulation</keyword>
<keyword id="KW-0808">Transferase</keyword>